<name>TL29_ARATH</name>
<gene>
    <name type="primary">TL29</name>
    <name type="synonym">APX4</name>
    <name type="ordered locus">At4g09010</name>
    <name type="ORF">F23J3.40</name>
</gene>
<reference key="1">
    <citation type="journal article" date="1999" name="Nature">
        <title>Sequence and analysis of chromosome 4 of the plant Arabidopsis thaliana.</title>
        <authorList>
            <person name="Mayer K.F.X."/>
            <person name="Schueller C."/>
            <person name="Wambutt R."/>
            <person name="Murphy G."/>
            <person name="Volckaert G."/>
            <person name="Pohl T."/>
            <person name="Duesterhoeft A."/>
            <person name="Stiekema W."/>
            <person name="Entian K.-D."/>
            <person name="Terryn N."/>
            <person name="Harris B."/>
            <person name="Ansorge W."/>
            <person name="Brandt P."/>
            <person name="Grivell L.A."/>
            <person name="Rieger M."/>
            <person name="Weichselgartner M."/>
            <person name="de Simone V."/>
            <person name="Obermaier B."/>
            <person name="Mache R."/>
            <person name="Mueller M."/>
            <person name="Kreis M."/>
            <person name="Delseny M."/>
            <person name="Puigdomenech P."/>
            <person name="Watson M."/>
            <person name="Schmidtheini T."/>
            <person name="Reichert B."/>
            <person name="Portetelle D."/>
            <person name="Perez-Alonso M."/>
            <person name="Boutry M."/>
            <person name="Bancroft I."/>
            <person name="Vos P."/>
            <person name="Hoheisel J."/>
            <person name="Zimmermann W."/>
            <person name="Wedler H."/>
            <person name="Ridley P."/>
            <person name="Langham S.-A."/>
            <person name="McCullagh B."/>
            <person name="Bilham L."/>
            <person name="Robben J."/>
            <person name="van der Schueren J."/>
            <person name="Grymonprez B."/>
            <person name="Chuang Y.-J."/>
            <person name="Vandenbussche F."/>
            <person name="Braeken M."/>
            <person name="Weltjens I."/>
            <person name="Voet M."/>
            <person name="Bastiaens I."/>
            <person name="Aert R."/>
            <person name="Defoor E."/>
            <person name="Weitzenegger T."/>
            <person name="Bothe G."/>
            <person name="Ramsperger U."/>
            <person name="Hilbert H."/>
            <person name="Braun M."/>
            <person name="Holzer E."/>
            <person name="Brandt A."/>
            <person name="Peters S."/>
            <person name="van Staveren M."/>
            <person name="Dirkse W."/>
            <person name="Mooijman P."/>
            <person name="Klein Lankhorst R."/>
            <person name="Rose M."/>
            <person name="Hauf J."/>
            <person name="Koetter P."/>
            <person name="Berneiser S."/>
            <person name="Hempel S."/>
            <person name="Feldpausch M."/>
            <person name="Lamberth S."/>
            <person name="Van den Daele H."/>
            <person name="De Keyser A."/>
            <person name="Buysshaert C."/>
            <person name="Gielen J."/>
            <person name="Villarroel R."/>
            <person name="De Clercq R."/>
            <person name="van Montagu M."/>
            <person name="Rogers J."/>
            <person name="Cronin A."/>
            <person name="Quail M.A."/>
            <person name="Bray-Allen S."/>
            <person name="Clark L."/>
            <person name="Doggett J."/>
            <person name="Hall S."/>
            <person name="Kay M."/>
            <person name="Lennard N."/>
            <person name="McLay K."/>
            <person name="Mayes R."/>
            <person name="Pettett A."/>
            <person name="Rajandream M.A."/>
            <person name="Lyne M."/>
            <person name="Benes V."/>
            <person name="Rechmann S."/>
            <person name="Borkova D."/>
            <person name="Bloecker H."/>
            <person name="Scharfe M."/>
            <person name="Grimm M."/>
            <person name="Loehnert T.-H."/>
            <person name="Dose S."/>
            <person name="de Haan M."/>
            <person name="Maarse A.C."/>
            <person name="Schaefer M."/>
            <person name="Mueller-Auer S."/>
            <person name="Gabel C."/>
            <person name="Fuchs M."/>
            <person name="Fartmann B."/>
            <person name="Granderath K."/>
            <person name="Dauner D."/>
            <person name="Herzl A."/>
            <person name="Neumann S."/>
            <person name="Argiriou A."/>
            <person name="Vitale D."/>
            <person name="Liguori R."/>
            <person name="Piravandi E."/>
            <person name="Massenet O."/>
            <person name="Quigley F."/>
            <person name="Clabauld G."/>
            <person name="Muendlein A."/>
            <person name="Felber R."/>
            <person name="Schnabl S."/>
            <person name="Hiller R."/>
            <person name="Schmidt W."/>
            <person name="Lecharny A."/>
            <person name="Aubourg S."/>
            <person name="Chefdor F."/>
            <person name="Cooke R."/>
            <person name="Berger C."/>
            <person name="Monfort A."/>
            <person name="Casacuberta E."/>
            <person name="Gibbons T."/>
            <person name="Weber N."/>
            <person name="Vandenbol M."/>
            <person name="Bargues M."/>
            <person name="Terol J."/>
            <person name="Torres A."/>
            <person name="Perez-Perez A."/>
            <person name="Purnelle B."/>
            <person name="Bent E."/>
            <person name="Johnson S."/>
            <person name="Tacon D."/>
            <person name="Jesse T."/>
            <person name="Heijnen L."/>
            <person name="Schwarz S."/>
            <person name="Scholler P."/>
            <person name="Heber S."/>
            <person name="Francs P."/>
            <person name="Bielke C."/>
            <person name="Frishman D."/>
            <person name="Haase D."/>
            <person name="Lemcke K."/>
            <person name="Mewes H.-W."/>
            <person name="Stocker S."/>
            <person name="Zaccaria P."/>
            <person name="Bevan M."/>
            <person name="Wilson R.K."/>
            <person name="de la Bastide M."/>
            <person name="Habermann K."/>
            <person name="Parnell L."/>
            <person name="Dedhia N."/>
            <person name="Gnoj L."/>
            <person name="Schutz K."/>
            <person name="Huang E."/>
            <person name="Spiegel L."/>
            <person name="Sekhon M."/>
            <person name="Murray J."/>
            <person name="Sheet P."/>
            <person name="Cordes M."/>
            <person name="Abu-Threideh J."/>
            <person name="Stoneking T."/>
            <person name="Kalicki J."/>
            <person name="Graves T."/>
            <person name="Harmon G."/>
            <person name="Edwards J."/>
            <person name="Latreille P."/>
            <person name="Courtney L."/>
            <person name="Cloud J."/>
            <person name="Abbott A."/>
            <person name="Scott K."/>
            <person name="Johnson D."/>
            <person name="Minx P."/>
            <person name="Bentley D."/>
            <person name="Fulton B."/>
            <person name="Miller N."/>
            <person name="Greco T."/>
            <person name="Kemp K."/>
            <person name="Kramer J."/>
            <person name="Fulton L."/>
            <person name="Mardis E."/>
            <person name="Dante M."/>
            <person name="Pepin K."/>
            <person name="Hillier L.W."/>
            <person name="Nelson J."/>
            <person name="Spieth J."/>
            <person name="Ryan E."/>
            <person name="Andrews S."/>
            <person name="Geisel C."/>
            <person name="Layman D."/>
            <person name="Du H."/>
            <person name="Ali J."/>
            <person name="Berghoff A."/>
            <person name="Jones K."/>
            <person name="Drone K."/>
            <person name="Cotton M."/>
            <person name="Joshu C."/>
            <person name="Antonoiu B."/>
            <person name="Zidanic M."/>
            <person name="Strong C."/>
            <person name="Sun H."/>
            <person name="Lamar B."/>
            <person name="Yordan C."/>
            <person name="Ma P."/>
            <person name="Zhong J."/>
            <person name="Preston R."/>
            <person name="Vil D."/>
            <person name="Shekher M."/>
            <person name="Matero A."/>
            <person name="Shah R."/>
            <person name="Swaby I.K."/>
            <person name="O'Shaughnessy A."/>
            <person name="Rodriguez M."/>
            <person name="Hoffman J."/>
            <person name="Till S."/>
            <person name="Granat S."/>
            <person name="Shohdy N."/>
            <person name="Hasegawa A."/>
            <person name="Hameed A."/>
            <person name="Lodhi M."/>
            <person name="Johnson A."/>
            <person name="Chen E."/>
            <person name="Marra M.A."/>
            <person name="Martienssen R."/>
            <person name="McCombie W.R."/>
        </authorList>
    </citation>
    <scope>NUCLEOTIDE SEQUENCE [LARGE SCALE GENOMIC DNA]</scope>
    <source>
        <strain>cv. Columbia</strain>
    </source>
</reference>
<reference key="2">
    <citation type="journal article" date="2017" name="Plant J.">
        <title>Araport11: a complete reannotation of the Arabidopsis thaliana reference genome.</title>
        <authorList>
            <person name="Cheng C.Y."/>
            <person name="Krishnakumar V."/>
            <person name="Chan A.P."/>
            <person name="Thibaud-Nissen F."/>
            <person name="Schobel S."/>
            <person name="Town C.D."/>
        </authorList>
    </citation>
    <scope>GENOME REANNOTATION</scope>
    <source>
        <strain>cv. Columbia</strain>
    </source>
</reference>
<reference key="3">
    <citation type="journal article" date="2003" name="Science">
        <title>Empirical analysis of transcriptional activity in the Arabidopsis genome.</title>
        <authorList>
            <person name="Yamada K."/>
            <person name="Lim J."/>
            <person name="Dale J.M."/>
            <person name="Chen H."/>
            <person name="Shinn P."/>
            <person name="Palm C.J."/>
            <person name="Southwick A.M."/>
            <person name="Wu H.C."/>
            <person name="Kim C.J."/>
            <person name="Nguyen M."/>
            <person name="Pham P.K."/>
            <person name="Cheuk R.F."/>
            <person name="Karlin-Newmann G."/>
            <person name="Liu S.X."/>
            <person name="Lam B."/>
            <person name="Sakano H."/>
            <person name="Wu T."/>
            <person name="Yu G."/>
            <person name="Miranda M."/>
            <person name="Quach H.L."/>
            <person name="Tripp M."/>
            <person name="Chang C.H."/>
            <person name="Lee J.M."/>
            <person name="Toriumi M.J."/>
            <person name="Chan M.M."/>
            <person name="Tang C.C."/>
            <person name="Onodera C.S."/>
            <person name="Deng J.M."/>
            <person name="Akiyama K."/>
            <person name="Ansari Y."/>
            <person name="Arakawa T."/>
            <person name="Banh J."/>
            <person name="Banno F."/>
            <person name="Bowser L."/>
            <person name="Brooks S.Y."/>
            <person name="Carninci P."/>
            <person name="Chao Q."/>
            <person name="Choy N."/>
            <person name="Enju A."/>
            <person name="Goldsmith A.D."/>
            <person name="Gurjal M."/>
            <person name="Hansen N.F."/>
            <person name="Hayashizaki Y."/>
            <person name="Johnson-Hopson C."/>
            <person name="Hsuan V.W."/>
            <person name="Iida K."/>
            <person name="Karnes M."/>
            <person name="Khan S."/>
            <person name="Koesema E."/>
            <person name="Ishida J."/>
            <person name="Jiang P.X."/>
            <person name="Jones T."/>
            <person name="Kawai J."/>
            <person name="Kamiya A."/>
            <person name="Meyers C."/>
            <person name="Nakajima M."/>
            <person name="Narusaka M."/>
            <person name="Seki M."/>
            <person name="Sakurai T."/>
            <person name="Satou M."/>
            <person name="Tamse R."/>
            <person name="Vaysberg M."/>
            <person name="Wallender E.K."/>
            <person name="Wong C."/>
            <person name="Yamamura Y."/>
            <person name="Yuan S."/>
            <person name="Shinozaki K."/>
            <person name="Davis R.W."/>
            <person name="Theologis A."/>
            <person name="Ecker J.R."/>
        </authorList>
    </citation>
    <scope>NUCLEOTIDE SEQUENCE [LARGE SCALE MRNA]</scope>
    <source>
        <strain>cv. Columbia</strain>
    </source>
</reference>
<reference key="4">
    <citation type="journal article" date="2002" name="Plant Physiol.">
        <title>Heat stress- and heat shock transcription factor-dependent expression and activity of ascorbate peroxidase in Arabidopsis.</title>
        <authorList>
            <person name="Panchuk I.I."/>
            <person name="Volkov R.A."/>
            <person name="Schoffl F."/>
        </authorList>
    </citation>
    <scope>NUCLEOTIDE SEQUENCE [MRNA] OF 11-306</scope>
    <source>
        <strain>cv. Columbia</strain>
        <tissue>Leaf</tissue>
    </source>
</reference>
<reference key="5">
    <citation type="journal article" date="2000" name="FEBS Lett.">
        <title>A peroxidase homologue and novel plastocyanin located by proteomics to the Arabidopsis chloroplast thylakoid lumen.</title>
        <authorList>
            <person name="Kieselbach T."/>
            <person name="Bystedt M."/>
            <person name="Hynds P."/>
            <person name="Robinson C."/>
            <person name="Schroeder W.P."/>
        </authorList>
    </citation>
    <scope>PROTEIN SEQUENCE OF 83-112</scope>
    <scope>SUBCELLULAR LOCATION</scope>
    <source>
        <strain>cv. Columbia</strain>
    </source>
</reference>
<reference key="6">
    <citation type="journal article" date="2002" name="J. Biol. Chem.">
        <title>Proteome map of the chloroplast lumen of Arabidopsis thaliana.</title>
        <authorList>
            <person name="Schubert M."/>
            <person name="Petersson U.A."/>
            <person name="Haas B.J."/>
            <person name="Funk C."/>
            <person name="Schroeder W.P."/>
            <person name="Kieselbach T."/>
        </authorList>
    </citation>
    <scope>PROTEIN SEQUENCE OF 83-112</scope>
    <scope>SUBCELLULAR LOCATION</scope>
</reference>
<reference key="7">
    <citation type="journal article" date="2005" name="Planta">
        <title>Expression of the Apx gene family during leaf senescence of Arabidopsis thaliana.</title>
        <authorList>
            <person name="Panchuk I.I."/>
            <person name="Zentgraf U."/>
            <person name="Volkov R.A."/>
        </authorList>
    </citation>
    <scope>DEVELOPMENTAL STAGE</scope>
</reference>
<reference key="8">
    <citation type="journal article" date="2009" name="Plant Cell Physiol.">
        <title>The TL29 protein is lumen located, associated with PSII and not an ascorbate peroxidase.</title>
        <authorList>
            <person name="Granlund I."/>
            <person name="Storm P."/>
            <person name="Schubert M."/>
            <person name="Garcia-Cerdan J.G."/>
            <person name="Funk C."/>
            <person name="Schroder W.P."/>
        </authorList>
    </citation>
    <scope>FUNCTION REVISION</scope>
    <scope>SUBCELLULAR LOCATION</scope>
</reference>
<reference key="9">
    <citation type="journal article" date="2012" name="J. Proteome Res.">
        <title>Identification of phosphoproteins in Arabidopsis thaliana leaves using polyethylene glycol fractionation, immobilized metal-ion affinity chromatography, two-dimensional gel electrophoresis and mass spectrometry.</title>
        <authorList>
            <person name="Aryal U.K."/>
            <person name="Krochko J.E."/>
            <person name="Ross A.R."/>
        </authorList>
    </citation>
    <scope>PHOSPHORYLATION [LARGE SCALE ANALYSIS] AT SER-155</scope>
    <scope>IDENTIFICATION BY MASS SPECTROMETRY [LARGE SCALE ANALYSIS]</scope>
</reference>
<dbReference type="EC" id="1.-.-.-"/>
<dbReference type="EMBL" id="AC005359">
    <property type="status" value="NOT_ANNOTATED_CDS"/>
    <property type="molecule type" value="Genomic_DNA"/>
</dbReference>
<dbReference type="EMBL" id="AL161513">
    <property type="protein sequence ID" value="CAB78025.1"/>
    <property type="molecule type" value="Genomic_DNA"/>
</dbReference>
<dbReference type="EMBL" id="CP002687">
    <property type="protein sequence ID" value="AEE82711.1"/>
    <property type="molecule type" value="Genomic_DNA"/>
</dbReference>
<dbReference type="EMBL" id="AF370534">
    <property type="protein sequence ID" value="AAK48961.1"/>
    <property type="molecule type" value="mRNA"/>
</dbReference>
<dbReference type="EMBL" id="AY072503">
    <property type="protein sequence ID" value="AAL66918.1"/>
    <property type="molecule type" value="mRNA"/>
</dbReference>
<dbReference type="EMBL" id="AF441713">
    <property type="protein sequence ID" value="AAP72143.1"/>
    <property type="molecule type" value="mRNA"/>
</dbReference>
<dbReference type="PIR" id="A85091">
    <property type="entry name" value="A85091"/>
</dbReference>
<dbReference type="RefSeq" id="NP_192640.1">
    <property type="nucleotide sequence ID" value="NM_116970.3"/>
</dbReference>
<dbReference type="PDB" id="3RRW">
    <property type="method" value="X-ray"/>
    <property type="resolution" value="2.50 A"/>
    <property type="chains" value="A/B=83-349"/>
</dbReference>
<dbReference type="PDBsum" id="3RRW"/>
<dbReference type="SMR" id="P82281"/>
<dbReference type="BioGRID" id="11779">
    <property type="interactions" value="2"/>
</dbReference>
<dbReference type="FunCoup" id="P82281">
    <property type="interactions" value="1414"/>
</dbReference>
<dbReference type="IntAct" id="P82281">
    <property type="interactions" value="3"/>
</dbReference>
<dbReference type="STRING" id="3702.P82281"/>
<dbReference type="PeroxiBase" id="3920">
    <property type="entry name" value="AtAPx07"/>
</dbReference>
<dbReference type="iPTMnet" id="P82281"/>
<dbReference type="MetOSite" id="P82281"/>
<dbReference type="PaxDb" id="3702-AT4G09010.1"/>
<dbReference type="ProteomicsDB" id="234320"/>
<dbReference type="EnsemblPlants" id="AT4G09010.1">
    <property type="protein sequence ID" value="AT4G09010.1"/>
    <property type="gene ID" value="AT4G09010"/>
</dbReference>
<dbReference type="GeneID" id="826480"/>
<dbReference type="Gramene" id="AT4G09010.1">
    <property type="protein sequence ID" value="AT4G09010.1"/>
    <property type="gene ID" value="AT4G09010"/>
</dbReference>
<dbReference type="KEGG" id="ath:AT4G09010"/>
<dbReference type="Araport" id="AT4G09010"/>
<dbReference type="TAIR" id="AT4G09010">
    <property type="gene designation" value="TL29"/>
</dbReference>
<dbReference type="eggNOG" id="ENOG502QR5T">
    <property type="taxonomic scope" value="Eukaryota"/>
</dbReference>
<dbReference type="HOGENOM" id="CLU_059254_0_0_1"/>
<dbReference type="InParanoid" id="P82281"/>
<dbReference type="OrthoDB" id="2113341at2759"/>
<dbReference type="PhylomeDB" id="P82281"/>
<dbReference type="EvolutionaryTrace" id="P82281"/>
<dbReference type="PRO" id="PR:P82281"/>
<dbReference type="Proteomes" id="UP000006548">
    <property type="component" value="Chromosome 4"/>
</dbReference>
<dbReference type="ExpressionAtlas" id="P82281">
    <property type="expression patterns" value="baseline and differential"/>
</dbReference>
<dbReference type="GO" id="GO:0009507">
    <property type="term" value="C:chloroplast"/>
    <property type="evidence" value="ECO:0007005"/>
    <property type="project" value="TAIR"/>
</dbReference>
<dbReference type="GO" id="GO:0009534">
    <property type="term" value="C:chloroplast thylakoid"/>
    <property type="evidence" value="ECO:0007005"/>
    <property type="project" value="TAIR"/>
</dbReference>
<dbReference type="GO" id="GO:0009543">
    <property type="term" value="C:chloroplast thylakoid lumen"/>
    <property type="evidence" value="ECO:0000314"/>
    <property type="project" value="TAIR"/>
</dbReference>
<dbReference type="GO" id="GO:0009535">
    <property type="term" value="C:chloroplast thylakoid membrane"/>
    <property type="evidence" value="ECO:0007005"/>
    <property type="project" value="TAIR"/>
</dbReference>
<dbReference type="GO" id="GO:0005737">
    <property type="term" value="C:cytoplasm"/>
    <property type="evidence" value="ECO:0007005"/>
    <property type="project" value="TAIR"/>
</dbReference>
<dbReference type="GO" id="GO:0005829">
    <property type="term" value="C:cytosol"/>
    <property type="evidence" value="ECO:0007005"/>
    <property type="project" value="TAIR"/>
</dbReference>
<dbReference type="GO" id="GO:0005634">
    <property type="term" value="C:nucleus"/>
    <property type="evidence" value="ECO:0007005"/>
    <property type="project" value="TAIR"/>
</dbReference>
<dbReference type="GO" id="GO:0009579">
    <property type="term" value="C:thylakoid"/>
    <property type="evidence" value="ECO:0007005"/>
    <property type="project" value="TAIR"/>
</dbReference>
<dbReference type="GO" id="GO:0031977">
    <property type="term" value="C:thylakoid lumen"/>
    <property type="evidence" value="ECO:0007005"/>
    <property type="project" value="TAIR"/>
</dbReference>
<dbReference type="GO" id="GO:0020037">
    <property type="term" value="F:heme binding"/>
    <property type="evidence" value="ECO:0007669"/>
    <property type="project" value="InterPro"/>
</dbReference>
<dbReference type="GO" id="GO:0004601">
    <property type="term" value="F:peroxidase activity"/>
    <property type="evidence" value="ECO:0007669"/>
    <property type="project" value="InterPro"/>
</dbReference>
<dbReference type="GO" id="GO:0034599">
    <property type="term" value="P:cellular response to oxidative stress"/>
    <property type="evidence" value="ECO:0007669"/>
    <property type="project" value="InterPro"/>
</dbReference>
<dbReference type="CDD" id="cd00314">
    <property type="entry name" value="plant_peroxidase_like"/>
    <property type="match status" value="1"/>
</dbReference>
<dbReference type="FunFam" id="1.20.58.1620:FF:000001">
    <property type="entry name" value="Thylakoid lumenal 29 kDa protein, chloroplastic"/>
    <property type="match status" value="1"/>
</dbReference>
<dbReference type="FunFam" id="1.10.520.10:FF:000013">
    <property type="entry name" value="thylakoid lumenal 29 kDa protein, chloroplastic"/>
    <property type="match status" value="1"/>
</dbReference>
<dbReference type="Gene3D" id="1.10.520.10">
    <property type="match status" value="1"/>
</dbReference>
<dbReference type="Gene3D" id="1.20.58.1620">
    <property type="match status" value="1"/>
</dbReference>
<dbReference type="InterPro" id="IPR044831">
    <property type="entry name" value="Ccp1-like"/>
</dbReference>
<dbReference type="InterPro" id="IPR002016">
    <property type="entry name" value="Haem_peroxidase"/>
</dbReference>
<dbReference type="InterPro" id="IPR010255">
    <property type="entry name" value="Haem_peroxidase_sf"/>
</dbReference>
<dbReference type="InterPro" id="IPR002207">
    <property type="entry name" value="Peroxidase_I"/>
</dbReference>
<dbReference type="PANTHER" id="PTHR31356:SF34">
    <property type="entry name" value="THYLAKOID LUMENAL 29 KDA PROTEIN, CHLOROPLASTIC"/>
    <property type="match status" value="1"/>
</dbReference>
<dbReference type="PANTHER" id="PTHR31356">
    <property type="entry name" value="THYLAKOID LUMENAL 29 KDA PROTEIN, CHLOROPLASTIC-RELATED"/>
    <property type="match status" value="1"/>
</dbReference>
<dbReference type="Pfam" id="PF00141">
    <property type="entry name" value="peroxidase"/>
    <property type="match status" value="1"/>
</dbReference>
<dbReference type="PRINTS" id="PR00459">
    <property type="entry name" value="ASPEROXIDASE"/>
</dbReference>
<dbReference type="SUPFAM" id="SSF48113">
    <property type="entry name" value="Heme-dependent peroxidases"/>
    <property type="match status" value="1"/>
</dbReference>
<proteinExistence type="evidence at protein level"/>
<protein>
    <recommendedName>
        <fullName>Thylakoid lumenal 29 kDa protein, chloroplastic</fullName>
        <shortName>TL29</shortName>
        <ecNumber>1.-.-.-</ecNumber>
    </recommendedName>
    <alternativeName>
        <fullName>AtAPx07</fullName>
    </alternativeName>
    <alternativeName>
        <fullName>P29</fullName>
    </alternativeName>
    <alternativeName>
        <fullName>Probable L-ascorbate peroxidase 4</fullName>
    </alternativeName>
</protein>
<feature type="transit peptide" description="Chloroplast" evidence="1">
    <location>
        <begin position="1"/>
        <end status="unknown"/>
    </location>
</feature>
<feature type="transit peptide" description="Thylakoid" evidence="2 3">
    <location>
        <begin status="unknown"/>
        <end position="82"/>
    </location>
</feature>
<feature type="chain" id="PRO_0000023635" description="Thylakoid lumenal 29 kDa protein, chloroplastic">
    <location>
        <begin position="83"/>
        <end position="349"/>
    </location>
</feature>
<feature type="modified residue" description="Phosphoserine" evidence="9">
    <location>
        <position position="155"/>
    </location>
</feature>
<feature type="sequence conflict" description="In Ref. 4; AAP72143." evidence="6" ref="4">
    <original>S</original>
    <variation>A</variation>
    <location>
        <position position="96"/>
    </location>
</feature>
<feature type="helix" evidence="10">
    <location>
        <begin position="86"/>
        <end position="108"/>
    </location>
</feature>
<feature type="helix" evidence="10">
    <location>
        <begin position="110"/>
        <end position="112"/>
    </location>
</feature>
<feature type="helix" evidence="10">
    <location>
        <begin position="113"/>
        <end position="124"/>
    </location>
</feature>
<feature type="turn" evidence="10">
    <location>
        <begin position="129"/>
        <end position="132"/>
    </location>
</feature>
<feature type="strand" evidence="10">
    <location>
        <begin position="135"/>
        <end position="138"/>
    </location>
</feature>
<feature type="helix" evidence="10">
    <location>
        <begin position="139"/>
        <end position="141"/>
    </location>
</feature>
<feature type="helix" evidence="10">
    <location>
        <begin position="143"/>
        <end position="146"/>
    </location>
</feature>
<feature type="helix" evidence="10">
    <location>
        <begin position="149"/>
        <end position="151"/>
    </location>
</feature>
<feature type="helix" evidence="10">
    <location>
        <begin position="155"/>
        <end position="169"/>
    </location>
</feature>
<feature type="helix" evidence="10">
    <location>
        <begin position="179"/>
        <end position="202"/>
    </location>
</feature>
<feature type="turn" evidence="10">
    <location>
        <begin position="203"/>
        <end position="205"/>
    </location>
</feature>
<feature type="helix" evidence="10">
    <location>
        <begin position="207"/>
        <end position="216"/>
    </location>
</feature>
<feature type="helix" evidence="10">
    <location>
        <begin position="220"/>
        <end position="223"/>
    </location>
</feature>
<feature type="helix" evidence="10">
    <location>
        <begin position="224"/>
        <end position="228"/>
    </location>
</feature>
<feature type="helix" evidence="10">
    <location>
        <begin position="247"/>
        <end position="249"/>
    </location>
</feature>
<feature type="helix" evidence="10">
    <location>
        <begin position="252"/>
        <end position="261"/>
    </location>
</feature>
<feature type="helix" evidence="10">
    <location>
        <begin position="266"/>
        <end position="271"/>
    </location>
</feature>
<feature type="helix" evidence="10">
    <location>
        <begin position="273"/>
        <end position="276"/>
    </location>
</feature>
<feature type="helix" evidence="10">
    <location>
        <begin position="280"/>
        <end position="287"/>
    </location>
</feature>
<feature type="turn" evidence="10">
    <location>
        <begin position="291"/>
        <end position="293"/>
    </location>
</feature>
<feature type="helix" evidence="10">
    <location>
        <begin position="294"/>
        <end position="305"/>
    </location>
</feature>
<feature type="strand" evidence="10">
    <location>
        <begin position="306"/>
        <end position="308"/>
    </location>
</feature>
<feature type="helix" evidence="10">
    <location>
        <begin position="310"/>
        <end position="324"/>
    </location>
</feature>
<feature type="turn" evidence="10">
    <location>
        <begin position="325"/>
        <end position="327"/>
    </location>
</feature>
<feature type="turn" evidence="10">
    <location>
        <begin position="332"/>
        <end position="335"/>
    </location>
</feature>
<evidence type="ECO:0000255" key="1"/>
<evidence type="ECO:0000269" key="2">
    <source>
    </source>
</evidence>
<evidence type="ECO:0000269" key="3">
    <source>
    </source>
</evidence>
<evidence type="ECO:0000269" key="4">
    <source>
    </source>
</evidence>
<evidence type="ECO:0000269" key="5">
    <source>
    </source>
</evidence>
<evidence type="ECO:0000305" key="6"/>
<evidence type="ECO:0000305" key="7">
    <source>
    </source>
</evidence>
<evidence type="ECO:0000305" key="8">
    <source>
    </source>
</evidence>
<evidence type="ECO:0007744" key="9">
    <source>
    </source>
</evidence>
<evidence type="ECO:0007829" key="10">
    <source>
        <dbReference type="PDB" id="3RRW"/>
    </source>
</evidence>
<organism>
    <name type="scientific">Arabidopsis thaliana</name>
    <name type="common">Mouse-ear cress</name>
    <dbReference type="NCBI Taxonomy" id="3702"/>
    <lineage>
        <taxon>Eukaryota</taxon>
        <taxon>Viridiplantae</taxon>
        <taxon>Streptophyta</taxon>
        <taxon>Embryophyta</taxon>
        <taxon>Tracheophyta</taxon>
        <taxon>Spermatophyta</taxon>
        <taxon>Magnoliopsida</taxon>
        <taxon>eudicotyledons</taxon>
        <taxon>Gunneridae</taxon>
        <taxon>Pentapetalae</taxon>
        <taxon>rosids</taxon>
        <taxon>malvids</taxon>
        <taxon>Brassicales</taxon>
        <taxon>Brassicaceae</taxon>
        <taxon>Camelineae</taxon>
        <taxon>Arabidopsis</taxon>
    </lineage>
</organism>
<keyword id="KW-0002">3D-structure</keyword>
<keyword id="KW-0150">Chloroplast</keyword>
<keyword id="KW-0903">Direct protein sequencing</keyword>
<keyword id="KW-0560">Oxidoreductase</keyword>
<keyword id="KW-0597">Phosphoprotein</keyword>
<keyword id="KW-0934">Plastid</keyword>
<keyword id="KW-1185">Reference proteome</keyword>
<keyword id="KW-0793">Thylakoid</keyword>
<keyword id="KW-0809">Transit peptide</keyword>
<comment type="interaction">
    <interactant intactId="EBI-2895799">
        <id>P82281</id>
    </interactant>
    <interactant intactId="EBI-368542">
        <id>P0AA25</id>
        <label>trxA</label>
    </interactant>
    <organismsDiffer>true</organismsDiffer>
    <experiments>2</experiments>
</comment>
<comment type="subcellular location">
    <subcellularLocation>
        <location evidence="2 3 5">Plastid</location>
        <location evidence="2 3 5">Chloroplast thylakoid lumen</location>
    </subcellularLocation>
</comment>
<comment type="developmental stage">
    <text evidence="4">Down-regulated during leaf senescence.</text>
</comment>
<comment type="similarity">
    <text evidence="6">Belongs to the peroxidase family.</text>
</comment>
<comment type="caution">
    <text evidence="7 8">Was originally thought to be an ascorbate peroxidase (PubMed:12068123, PubMed:16034597). PubMed:19828564 fails to show any peroxidase activity associated with TL29 and demonstrates that TL29 could bind neither heme nor ascorbate. TL29 lacks the heme-binding site, the proton acceptor and the transition state stabilizer, which are conserved features of the ascorbate peroxidase.</text>
</comment>
<accession>P82281</accession>
<accession>Q7XZP6</accession>
<accession>Q9M0S6</accession>
<sequence length="349" mass="37934">MGGVSFLSTVPSFTNTTNHQHLTTLSSSSHRSAVIRCSKIEPQVSGESLAFHRRDVLKLAGTAVGMELIGNGFINNVGDAKAADLNQRRQRSEFQSKIKILLSTTIKAKPELVPSLLKLALNDAMTYDKATKSGGANGSIRFSSELSRAENEGLSDGLSLIEEVKKEIDSISKGGPISYADIIQLAGQSAVKFTYLASAIRKCGGNEEKGNLLYTAYGSAGQWGLFDRNFGRSDATEADPEGRVPQWGKATVQEMKDKFIAVGLGPRQLAVMSAFLGPDQAATEQLLATDPQVAPWVQKYQRSRETVSQTDYEVDLITAFTKLSCLGQQINFEAYTYPVERINLSKLKL</sequence>